<feature type="chain" id="PRO_0000216082" description="Stilbene synthase 1">
    <location>
        <begin position="1"/>
        <end position="392"/>
    </location>
</feature>
<feature type="active site" evidence="2">
    <location>
        <position position="164"/>
    </location>
</feature>
<feature type="binding site" evidence="1">
    <location>
        <begin position="55"/>
        <end position="58"/>
    </location>
    <ligand>
        <name>substrate</name>
    </ligand>
</feature>
<feature type="binding site" evidence="1">
    <location>
        <position position="267"/>
    </location>
    <ligand>
        <name>substrate</name>
    </ligand>
</feature>
<feature type="binding site" evidence="1">
    <location>
        <begin position="305"/>
        <end position="307"/>
    </location>
    <ligand>
        <name>substrate</name>
    </ligand>
</feature>
<feature type="sequence conflict" description="In Ref. 1; S63227 and 4; ABC84860." evidence="11" ref="1 4">
    <original>VPT</original>
    <variation>IPM</variation>
    <location>
        <begin position="387"/>
        <end position="389"/>
    </location>
</feature>
<keyword id="KW-0012">Acyltransferase</keyword>
<keyword id="KW-0963">Cytoplasm</keyword>
<keyword id="KW-0308">Genetically modified food</keyword>
<keyword id="KW-0611">Plant defense</keyword>
<keyword id="KW-0346">Stress response</keyword>
<keyword id="KW-0808">Transferase</keyword>
<evidence type="ECO:0000250" key="1"/>
<evidence type="ECO:0000255" key="2">
    <source>
        <dbReference type="PROSITE-ProRule" id="PRU10023"/>
    </source>
</evidence>
<evidence type="ECO:0000269" key="3">
    <source>
    </source>
</evidence>
<evidence type="ECO:0000269" key="4">
    <source>
    </source>
</evidence>
<evidence type="ECO:0000269" key="5">
    <source>
    </source>
</evidence>
<evidence type="ECO:0000269" key="6">
    <source>
    </source>
</evidence>
<evidence type="ECO:0000269" key="7">
    <source>
    </source>
</evidence>
<evidence type="ECO:0000269" key="8">
    <source>
    </source>
</evidence>
<evidence type="ECO:0000269" key="9">
    <source>
    </source>
</evidence>
<evidence type="ECO:0000269" key="10">
    <source ref="9"/>
</evidence>
<evidence type="ECO:0000305" key="11"/>
<accession>P28343</accession>
<accession>A5AGH1</accession>
<accession>Q2HY09</accession>
<accession>Q54AD0</accession>
<sequence>MASVEEFRNAQRAKGPATILAIGTATPDHCVYQSDYADYYFRVTKSEHMTELKKKFNRICDKSMIKKRYIHLTEEMLEEHPNIGAYMAPSLNIRQEIITAEVPRLGRDAALKALKEWGQPKSKITHLVFCTTSGVEMPGADYKLANLLGLETSVRRVMLYHQGCYAGGTVLRTAKDLAENNAGARVLVVCSEITVVTFRGPSEDALDSLVGQALFGDGSSAVIVGSDPDVSIERPLFQLVSAAQTFIPNSAGAIAGNLREVGLTFHLWPNVPTLISENIEKCLTQAFDPLGISDWNSLFWIAHPGGPAILDAVEAKLNLEKKKLEATRHVLSEYGNMSSACVLFILDEMRKKSLKGEKATTGEGLDWGVLFGFGPGLTIETVVLHSVPTVTN</sequence>
<organism>
    <name type="scientific">Vitis vinifera</name>
    <name type="common">Grape</name>
    <dbReference type="NCBI Taxonomy" id="29760"/>
    <lineage>
        <taxon>Eukaryota</taxon>
        <taxon>Viridiplantae</taxon>
        <taxon>Streptophyta</taxon>
        <taxon>Embryophyta</taxon>
        <taxon>Tracheophyta</taxon>
        <taxon>Spermatophyta</taxon>
        <taxon>Magnoliopsida</taxon>
        <taxon>eudicotyledons</taxon>
        <taxon>Gunneridae</taxon>
        <taxon>Pentapetalae</taxon>
        <taxon>rosids</taxon>
        <taxon>Vitales</taxon>
        <taxon>Vitaceae</taxon>
        <taxon>Viteae</taxon>
        <taxon>Vitis</taxon>
    </lineage>
</organism>
<proteinExistence type="evidence at protein level"/>
<protein>
    <recommendedName>
        <fullName>Stilbene synthase 1</fullName>
        <ecNumber>2.3.1.95</ecNumber>
    </recommendedName>
    <alternativeName>
        <fullName>PSV25</fullName>
    </alternativeName>
    <alternativeName>
        <fullName>Resveratrol synthase 1</fullName>
    </alternativeName>
    <alternativeName>
        <fullName>Trihydroxystilbene synthase 1</fullName>
        <shortName>StSy 1</shortName>
    </alternativeName>
    <alternativeName>
        <fullName>Vitis stilbene synthase 1</fullName>
    </alternativeName>
</protein>
<reference key="1">
    <citation type="journal article" date="1990" name="FEBS Lett.">
        <title>Grapevine stilbene synthase cDNA only slightly differing from chalcone synthase cDNA is expressed in Escherichia coli into a catalytically active enzyme.</title>
        <authorList>
            <person name="Melchior F."/>
            <person name="Kindl H."/>
        </authorList>
    </citation>
    <scope>NUCLEOTIDE SEQUENCE [MRNA]</scope>
    <source>
        <strain>cv. Optima</strain>
    </source>
</reference>
<reference key="2">
    <citation type="journal article" date="1991" name="Arch. Biochem. Biophys.">
        <title>Coordinate- and elicitor-dependent expression of stilbene synthase and phenylalanine ammonia-lyase genes in Vitis cv. Optima.</title>
        <authorList>
            <person name="Melchior F."/>
            <person name="Kindl H."/>
        </authorList>
    </citation>
    <scope>NUCLEOTIDE SEQUENCE [MRNA]</scope>
    <source>
        <strain>cv. Optima</strain>
    </source>
</reference>
<reference key="3">
    <citation type="journal article" date="2000" name="Plant Cell Rep.">
        <title>Kiwifruits (Actinidia deliciosa) transformed with a Vitis stilbene synthase gene produce piceid (resveratrol-glucoside).</title>
        <authorList>
            <person name="Kobayashi S."/>
            <person name="Ding C."/>
            <person name="Nakamura Y."/>
            <person name="Nakajima I."/>
            <person name="Matsumoto R."/>
        </authorList>
    </citation>
    <scope>NUCLEOTIDE SEQUENCE [GENOMIC DNA]</scope>
    <source>
        <strain>cv. Optima</strain>
    </source>
</reference>
<reference key="4">
    <citation type="submission" date="2006-01" db="EMBL/GenBank/DDBJ databases">
        <authorList>
            <person name="Zhang Y."/>
            <person name="Yu O."/>
        </authorList>
    </citation>
    <scope>NUCLEOTIDE SEQUENCE [MRNA]</scope>
</reference>
<reference key="5">
    <citation type="journal article" date="2007" name="Nature">
        <title>The grapevine genome sequence suggests ancestral hexaploidization in major angiosperm phyla.</title>
        <authorList>
            <person name="Jaillon O."/>
            <person name="Aury J.-M."/>
            <person name="Noel B."/>
            <person name="Policriti A."/>
            <person name="Clepet C."/>
            <person name="Casagrande A."/>
            <person name="Choisne N."/>
            <person name="Aubourg S."/>
            <person name="Vitulo N."/>
            <person name="Jubin C."/>
            <person name="Vezzi A."/>
            <person name="Legeai F."/>
            <person name="Hugueney P."/>
            <person name="Dasilva C."/>
            <person name="Horner D."/>
            <person name="Mica E."/>
            <person name="Jublot D."/>
            <person name="Poulain J."/>
            <person name="Bruyere C."/>
            <person name="Billault A."/>
            <person name="Segurens B."/>
            <person name="Gouyvenoux M."/>
            <person name="Ugarte E."/>
            <person name="Cattonaro F."/>
            <person name="Anthouard V."/>
            <person name="Vico V."/>
            <person name="Del Fabbro C."/>
            <person name="Alaux M."/>
            <person name="Di Gaspero G."/>
            <person name="Dumas V."/>
            <person name="Felice N."/>
            <person name="Paillard S."/>
            <person name="Juman I."/>
            <person name="Moroldo M."/>
            <person name="Scalabrin S."/>
            <person name="Canaguier A."/>
            <person name="Le Clainche I."/>
            <person name="Malacrida G."/>
            <person name="Durand E."/>
            <person name="Pesole G."/>
            <person name="Laucou V."/>
            <person name="Chatelet P."/>
            <person name="Merdinoglu D."/>
            <person name="Delledonne M."/>
            <person name="Pezzotti M."/>
            <person name="Lecharny A."/>
            <person name="Scarpelli C."/>
            <person name="Artiguenave F."/>
            <person name="Pe M.E."/>
            <person name="Valle G."/>
            <person name="Morgante M."/>
            <person name="Caboche M."/>
            <person name="Adam-Blondon A.-F."/>
            <person name="Weissenbach J."/>
            <person name="Quetier F."/>
            <person name="Wincker P."/>
        </authorList>
    </citation>
    <scope>NUCLEOTIDE SEQUENCE [LARGE SCALE GENOMIC DNA]</scope>
    <source>
        <strain>cv. Pinot noir / PN40024</strain>
    </source>
</reference>
<reference key="6">
    <citation type="journal article" date="2007" name="PLoS ONE">
        <title>A high quality draft consensus sequence of the genome of a heterozygous grapevine variety.</title>
        <authorList>
            <person name="Velasco R."/>
            <person name="Zharkikh A."/>
            <person name="Troggio M."/>
            <person name="Cartwright D.A."/>
            <person name="Cestaro A."/>
            <person name="Pruss D."/>
            <person name="Pindo M."/>
            <person name="FitzGerald L.M."/>
            <person name="Vezzulli S."/>
            <person name="Reid J."/>
            <person name="Malacarne G."/>
            <person name="Iliev D."/>
            <person name="Coppola G."/>
            <person name="Wardell B."/>
            <person name="Micheletti D."/>
            <person name="Macalma T."/>
            <person name="Facci M."/>
            <person name="Mitchell J.T."/>
            <person name="Perazzolli M."/>
            <person name="Eldredge G."/>
            <person name="Gatto P."/>
            <person name="Oyzerski R."/>
            <person name="Moretto M."/>
            <person name="Gutin N."/>
            <person name="Stefanini M."/>
            <person name="Chen Y."/>
            <person name="Segala C."/>
            <person name="Davenport C."/>
            <person name="Dematte L."/>
            <person name="Mraz A."/>
            <person name="Battilana J."/>
            <person name="Stormo K."/>
            <person name="Costa F."/>
            <person name="Tao Q."/>
            <person name="Si-Ammour A."/>
            <person name="Harkins T."/>
            <person name="Lackey A."/>
            <person name="Perbost C."/>
            <person name="Taillon B."/>
            <person name="Stella A."/>
            <person name="Solovyev V."/>
            <person name="Fawcett J.A."/>
            <person name="Sterck L."/>
            <person name="Vandepoele K."/>
            <person name="Grando S.M."/>
            <person name="Toppo S."/>
            <person name="Moser C."/>
            <person name="Lanchbury J."/>
            <person name="Bogden R."/>
            <person name="Skolnick M."/>
            <person name="Sgaramella V."/>
            <person name="Bhatnagar S.K."/>
            <person name="Fontana P."/>
            <person name="Gutin A."/>
            <person name="Van de Peer Y."/>
            <person name="Salamini F."/>
            <person name="Viola R."/>
        </authorList>
    </citation>
    <scope>NUCLEOTIDE SEQUENCE [LARGE SCALE GENOMIC DNA]</scope>
    <source>
        <strain>cv. Pinot noir</strain>
    </source>
</reference>
<reference key="7">
    <citation type="journal article" date="1997" name="Plant Mol. Biol.">
        <title>An ozone-responsive region of the grapevine resveratrol synthase promoter differs from the basal pathogen-responsive sequence.</title>
        <authorList>
            <person name="Schubert R."/>
            <person name="Fischer R."/>
            <person name="Hain R."/>
            <person name="Schreier P.H."/>
            <person name="Bahnweg G."/>
            <person name="Ernst D."/>
            <person name="Sandermann H. Jr."/>
        </authorList>
    </citation>
    <scope>INDUCTION BY OZONE AND PATHOGENS</scope>
    <scope>TISSUE SPECIFICITY</scope>
</reference>
<reference key="8">
    <citation type="journal article" date="2001" name="J. Exp. Bot.">
        <title>In vitro tolerance to Botrytis cinerea of grapevine 41B rootstock in transgenic plants expressing the stilbene synthase Vst1 gene under the control of a pathogen-inducible PR 10 promoter.</title>
        <authorList>
            <person name="Coutos-Thevenot P."/>
            <person name="Poinssot B."/>
            <person name="Bonomelli A."/>
            <person name="Yean H."/>
            <person name="Breda C."/>
            <person name="Buffard D."/>
            <person name="Esnault R."/>
            <person name="Hain R."/>
            <person name="Boulay M."/>
        </authorList>
    </citation>
    <scope>FUNCTION</scope>
    <scope>BIOTECHNOLOGY</scope>
    <scope>INDUCTION BY PHYTOPATHOGEN AND ABIOTIC STRESS</scope>
</reference>
<reference key="9">
    <citation type="patent" date="2004-10-05" number="US6800794">
        <title>Nucleic acid comprising the sequence of a promoter unductible by stress and a gene sequence coding for a stilbene synthase.</title>
        <authorList>
            <person name="Coutos-Thevenot P."/>
            <person name="Hain R."/>
            <person name="Schreier P.-H."/>
            <person name="Boulay M."/>
            <person name="Esnault R."/>
        </authorList>
    </citation>
    <scope>FUNCTION</scope>
    <scope>BIOTECHNOLOGY</scope>
</reference>
<reference key="10">
    <citation type="journal article" date="2004" name="Planta">
        <title>Expression of the grapevine stilbene synthase gene VST1 in papaya provides increased resistance against diseases caused by Phytophthora palmivora.</title>
        <authorList>
            <person name="Zhu Y.J."/>
            <person name="Agbayani R."/>
            <person name="Jackson M.C."/>
            <person name="Tang C.S."/>
            <person name="Moore P.H."/>
        </authorList>
    </citation>
    <scope>FUNCTION</scope>
    <scope>BIOTECHNOLOGY</scope>
</reference>
<reference key="11">
    <citation type="journal article" date="2004" name="Transgenic Res.">
        <title>Expression of the stilbene synthase (StSy) gene from grapevine in transgenic white poplar results in high accumulation of the antioxidant resveratrol glucosides.</title>
        <authorList>
            <person name="Giorcelli A."/>
            <person name="Sparvoli F."/>
            <person name="Mattivi F."/>
            <person name="Tava A."/>
            <person name="Balestrazzi A."/>
            <person name="Vrhovsek U."/>
            <person name="Calligari P."/>
            <person name="Bollini R."/>
            <person name="Confalonieri M."/>
        </authorList>
    </citation>
    <scope>BIOTECHNOLOGY</scope>
</reference>
<reference key="12">
    <citation type="journal article" date="2005" name="New Phytol.">
        <title>Jasmonates and Na-orthovanadate promote resveratrol production in Vitis vinifera cv. Barbera cell cultures.</title>
        <authorList>
            <person name="Tassoni A."/>
            <person name="Fornale S."/>
            <person name="Franceschetti M."/>
            <person name="Musiani F."/>
            <person name="Michael A.J."/>
            <person name="Perry B."/>
            <person name="Bagni N."/>
        </authorList>
    </citation>
    <scope>IDENTIFICATION BY MASS SPECTROMETRY</scope>
    <scope>INDUCTION BY JA</scope>
</reference>
<reference key="13">
    <citation type="journal article" date="2005" name="Plant Biotechnol. J.">
        <title>Antioxidant metabolite profiles in tomato fruit constitutively expressing the grapevine stilbene synthase gene.</title>
        <authorList>
            <person name="Giovinazzo G."/>
            <person name="D'Amico L."/>
            <person name="Paradiso A."/>
            <person name="Bollini R."/>
            <person name="Sparvoli F."/>
            <person name="DeGara L."/>
        </authorList>
    </citation>
    <scope>BIOTECHNOLOGY</scope>
</reference>
<reference key="14">
    <citation type="journal article" date="2006" name="J. Agric. Food Chem.">
        <title>Methyl jasmonate induces defense responses in grapevine and triggers protection against Erysiphe necator.</title>
        <authorList>
            <person name="Belhadj A."/>
            <person name="Saigne C."/>
            <person name="Telef N."/>
            <person name="Cluzet S."/>
            <person name="Bouscaut J."/>
            <person name="Corio-Costet M.-F."/>
            <person name="Merillon J.-M."/>
        </authorList>
    </citation>
    <scope>INDUCTION BY JA</scope>
</reference>
<reference key="15">
    <citation type="journal article" date="2006" name="Plant Cell Rep.">
        <title>Transgenic peas (Pisum sativum) expressing polygalacturonase inhibiting protein from raspberry (Rubus idaeus) and stilbene synthase from grape (Vitis vinifera).</title>
        <authorList>
            <person name="Richter A."/>
            <person name="de Kathen A."/>
            <person name="de Lorenzo G."/>
            <person name="Briviba K."/>
            <person name="Hain R."/>
            <person name="Ramsay G."/>
            <person name="Jacobsen H.-J."/>
            <person name="Kiesecker H."/>
        </authorList>
    </citation>
    <scope>INDUCTION BY UV LIGHT</scope>
</reference>
<reference key="16">
    <citation type="journal article" date="2006" name="Appl. Environ. Microbiol.">
        <title>Production of resveratrol in recombinant microorganisms.</title>
        <authorList>
            <person name="Beekwilder J."/>
            <person name="Wolswinkel R."/>
            <person name="Jonker H."/>
            <person name="Hall R."/>
            <person name="de Vos C.H.R."/>
            <person name="Bovy A."/>
        </authorList>
    </citation>
    <scope>BIOTECHNOLOGY</scope>
</reference>
<reference key="17">
    <citation type="journal article" date="2006" name="Mol. Plant Microbe Interact.">
        <title>Molecular basis of ergosterol-induced protection of grape against botrytis cinerea: induction of type I LTP promoter activity, WRKY, and stilbene synthase gene expression.</title>
        <authorList>
            <person name="Laquitaine L."/>
            <person name="Gomes E."/>
            <person name="Francois J."/>
            <person name="Marchive C."/>
            <person name="Pascal S."/>
            <person name="Hamdi S."/>
            <person name="Atanassova R."/>
            <person name="Delrot S."/>
            <person name="Coutos-Thevenot P."/>
        </authorList>
    </citation>
    <scope>INDUCTION BY ERGOSTEROL</scope>
</reference>
<reference key="18">
    <citation type="journal article" date="2007" name="Front. Biosci.">
        <title>Chemoprevention by resveratrol: molecular mechanisms and therapeutic potential.</title>
        <authorList>
            <person name="Shankar S."/>
            <person name="Singh G."/>
            <person name="Srivastava R.K."/>
        </authorList>
    </citation>
    <scope>REVIEW</scope>
</reference>
<name>THS1_VITVI</name>
<gene>
    <name type="primary">VINST1</name>
    <name type="synonym">STS2</name>
    <name type="synonym">VST1</name>
    <name type="ORF">GSVIVT00009226001</name>
    <name type="ORF">LOC100256566</name>
    <name type="ORF">VITISV_035301</name>
</gene>
<comment type="function">
    <text evidence="3 4 10">Mediates resistance to pathogens which are sensitive to stilbenes such as Botrytis cinerea, Eutypa lata and Plasmopora viticola by enhancing the production of phytoalexins. Confers resistance to Phytophthora palmivora when expressed in papaya.</text>
</comment>
<comment type="catalytic activity">
    <reaction>
        <text>4-coumaroyl-CoA + 3 malonyl-CoA + 3 H(+) = trans-resveratrol + 4 CO2 + 4 CoA</text>
        <dbReference type="Rhea" id="RHEA:11936"/>
        <dbReference type="ChEBI" id="CHEBI:15378"/>
        <dbReference type="ChEBI" id="CHEBI:16526"/>
        <dbReference type="ChEBI" id="CHEBI:45713"/>
        <dbReference type="ChEBI" id="CHEBI:57287"/>
        <dbReference type="ChEBI" id="CHEBI:57355"/>
        <dbReference type="ChEBI" id="CHEBI:57384"/>
        <dbReference type="EC" id="2.3.1.95"/>
    </reaction>
</comment>
<comment type="pathway">
    <text>Phytoalexin biosynthesis; 3,4',5-trihydroxystilbene biosynthesis; 3,4',5-trihydroxystilbene from trans-4-coumarate: step 2/2.</text>
</comment>
<comment type="subunit">
    <text evidence="1">Homodimer.</text>
</comment>
<comment type="subcellular location">
    <subcellularLocation>
        <location>Cytoplasm</location>
    </subcellularLocation>
</comment>
<comment type="tissue specificity">
    <text evidence="9">In leaves, expressed in palisade and spongy parenchyma cells and, to a lesser extent, in epidermal cells after induction.</text>
</comment>
<comment type="induction">
    <text evidence="3 5 6 7 8 9">By stress, including UV light, ozone and pathogens such as B.cinerea. Strongly induced by ergosterol, a non-specific fungal elicitor. Positively regulated by jasmonate (JA) and methyl-jasmonate (MeJA). Induction by phytopathogen attack decreases with grape berry ripening.</text>
</comment>
<comment type="biotechnology">
    <text>Driven by a stress-inducible promoter, stilbene synthase is used to improve resistance to pathogens which are sensitive to stilbenes such as B.cinerea, P.palmivora, E.lata or P.viticola.</text>
</comment>
<comment type="biotechnology">
    <text>Expression in heterologous systems (e.g. S.cerevisiae and Populus alba) is used to produce resveratrol for human food and medication. Resveratrol, a product of the chemical reaction catalyzed by stilbene synthase, exhibits several clinical benefits for human diseases, such as cancers, cardiovascular diseases and has positive effects on longevity.</text>
</comment>
<comment type="similarity">
    <text evidence="11">Belongs to the thiolase-like superfamily. Chalcone/stilbene synthases family.</text>
</comment>
<dbReference type="EC" id="2.3.1.95"/>
<dbReference type="EMBL" id="S63225">
    <property type="status" value="NOT_ANNOTATED_CDS"/>
    <property type="molecule type" value="mRNA"/>
</dbReference>
<dbReference type="EMBL" id="S63227">
    <property type="status" value="NOT_ANNOTATED_CDS"/>
    <property type="molecule type" value="mRNA"/>
</dbReference>
<dbReference type="EMBL" id="AB046375">
    <property type="protein sequence ID" value="BAB20980.1"/>
    <property type="molecule type" value="Genomic_DNA"/>
</dbReference>
<dbReference type="EMBL" id="DQ366302">
    <property type="protein sequence ID" value="ABC84860.1"/>
    <property type="molecule type" value="mRNA"/>
</dbReference>
<dbReference type="EMBL" id="AM426171">
    <property type="protein sequence ID" value="CAN60215.1"/>
    <property type="molecule type" value="Genomic_DNA"/>
</dbReference>
<dbReference type="PIR" id="S11044">
    <property type="entry name" value="S11044"/>
</dbReference>
<dbReference type="RefSeq" id="NP_001267939.1">
    <property type="nucleotide sequence ID" value="NM_001281010.1"/>
</dbReference>
<dbReference type="SMR" id="P28343"/>
<dbReference type="PaxDb" id="29760-VIT_16s0100g01070.t01"/>
<dbReference type="GeneID" id="100256566"/>
<dbReference type="KEGG" id="vvi:100256566"/>
<dbReference type="KEGG" id="vvi:104877274"/>
<dbReference type="eggNOG" id="ENOG502QRSY">
    <property type="taxonomic scope" value="Eukaryota"/>
</dbReference>
<dbReference type="OrthoDB" id="1500228at2759"/>
<dbReference type="BRENDA" id="2.3.1.95">
    <property type="organism ID" value="6671"/>
</dbReference>
<dbReference type="UniPathway" id="UPA00372">
    <property type="reaction ID" value="UER00548"/>
</dbReference>
<dbReference type="ExpressionAtlas" id="P28343">
    <property type="expression patterns" value="baseline and differential"/>
</dbReference>
<dbReference type="GO" id="GO:0005737">
    <property type="term" value="C:cytoplasm"/>
    <property type="evidence" value="ECO:0007669"/>
    <property type="project" value="UniProtKB-SubCell"/>
</dbReference>
<dbReference type="GO" id="GO:0050350">
    <property type="term" value="F:trihydroxystilbene synthase activity"/>
    <property type="evidence" value="ECO:0007669"/>
    <property type="project" value="UniProtKB-EC"/>
</dbReference>
<dbReference type="GO" id="GO:0009058">
    <property type="term" value="P:biosynthetic process"/>
    <property type="evidence" value="ECO:0007669"/>
    <property type="project" value="InterPro"/>
</dbReference>
<dbReference type="GO" id="GO:0006952">
    <property type="term" value="P:defense response"/>
    <property type="evidence" value="ECO:0007669"/>
    <property type="project" value="UniProtKB-KW"/>
</dbReference>
<dbReference type="CDD" id="cd00831">
    <property type="entry name" value="CHS_like"/>
    <property type="match status" value="1"/>
</dbReference>
<dbReference type="FunFam" id="3.40.47.10:FF:000014">
    <property type="entry name" value="Chalcone synthase 1"/>
    <property type="match status" value="1"/>
</dbReference>
<dbReference type="FunFam" id="3.40.47.10:FF:000025">
    <property type="entry name" value="Chalcone synthase 2"/>
    <property type="match status" value="1"/>
</dbReference>
<dbReference type="Gene3D" id="3.40.47.10">
    <property type="match status" value="2"/>
</dbReference>
<dbReference type="InterPro" id="IPR012328">
    <property type="entry name" value="Chalcone/stilbene_synt_C"/>
</dbReference>
<dbReference type="InterPro" id="IPR001099">
    <property type="entry name" value="Chalcone/stilbene_synt_N"/>
</dbReference>
<dbReference type="InterPro" id="IPR018088">
    <property type="entry name" value="Chalcone/stilbene_synthase_AS"/>
</dbReference>
<dbReference type="InterPro" id="IPR011141">
    <property type="entry name" value="Polyketide_synthase_type-III"/>
</dbReference>
<dbReference type="InterPro" id="IPR016039">
    <property type="entry name" value="Thiolase-like"/>
</dbReference>
<dbReference type="PANTHER" id="PTHR11877:SF14">
    <property type="entry name" value="CHALCONE SYNTHASE"/>
    <property type="match status" value="1"/>
</dbReference>
<dbReference type="PANTHER" id="PTHR11877">
    <property type="entry name" value="HYDROXYMETHYLGLUTARYL-COA SYNTHASE"/>
    <property type="match status" value="1"/>
</dbReference>
<dbReference type="Pfam" id="PF02797">
    <property type="entry name" value="Chal_sti_synt_C"/>
    <property type="match status" value="1"/>
</dbReference>
<dbReference type="Pfam" id="PF00195">
    <property type="entry name" value="Chal_sti_synt_N"/>
    <property type="match status" value="1"/>
</dbReference>
<dbReference type="PIRSF" id="PIRSF000451">
    <property type="entry name" value="PKS_III"/>
    <property type="match status" value="1"/>
</dbReference>
<dbReference type="SUPFAM" id="SSF53901">
    <property type="entry name" value="Thiolase-like"/>
    <property type="match status" value="2"/>
</dbReference>
<dbReference type="PROSITE" id="PS00441">
    <property type="entry name" value="CHALCONE_SYNTH"/>
    <property type="match status" value="1"/>
</dbReference>